<evidence type="ECO:0000255" key="1">
    <source>
        <dbReference type="HAMAP-Rule" id="MF_00480"/>
    </source>
</evidence>
<evidence type="ECO:0000305" key="2"/>
<feature type="chain" id="PRO_1000060416" description="Small ribosomal subunit protein uS7">
    <location>
        <begin position="1"/>
        <end position="156"/>
    </location>
</feature>
<accession>A7ZSL6</accession>
<dbReference type="EMBL" id="CP000800">
    <property type="protein sequence ID" value="ABV19401.1"/>
    <property type="molecule type" value="Genomic_DNA"/>
</dbReference>
<dbReference type="RefSeq" id="WP_001138043.1">
    <property type="nucleotide sequence ID" value="NC_009801.1"/>
</dbReference>
<dbReference type="SMR" id="A7ZSL6"/>
<dbReference type="GeneID" id="93778657"/>
<dbReference type="KEGG" id="ecw:EcE24377A_3810"/>
<dbReference type="HOGENOM" id="CLU_072226_1_1_6"/>
<dbReference type="Proteomes" id="UP000001122">
    <property type="component" value="Chromosome"/>
</dbReference>
<dbReference type="GO" id="GO:0015935">
    <property type="term" value="C:small ribosomal subunit"/>
    <property type="evidence" value="ECO:0007669"/>
    <property type="project" value="InterPro"/>
</dbReference>
<dbReference type="GO" id="GO:0019843">
    <property type="term" value="F:rRNA binding"/>
    <property type="evidence" value="ECO:0007669"/>
    <property type="project" value="UniProtKB-UniRule"/>
</dbReference>
<dbReference type="GO" id="GO:0003735">
    <property type="term" value="F:structural constituent of ribosome"/>
    <property type="evidence" value="ECO:0007669"/>
    <property type="project" value="InterPro"/>
</dbReference>
<dbReference type="GO" id="GO:0000049">
    <property type="term" value="F:tRNA binding"/>
    <property type="evidence" value="ECO:0007669"/>
    <property type="project" value="UniProtKB-UniRule"/>
</dbReference>
<dbReference type="GO" id="GO:0006412">
    <property type="term" value="P:translation"/>
    <property type="evidence" value="ECO:0007669"/>
    <property type="project" value="UniProtKB-UniRule"/>
</dbReference>
<dbReference type="CDD" id="cd14869">
    <property type="entry name" value="uS7_Bacteria"/>
    <property type="match status" value="1"/>
</dbReference>
<dbReference type="FunFam" id="1.10.455.10:FF:000001">
    <property type="entry name" value="30S ribosomal protein S7"/>
    <property type="match status" value="1"/>
</dbReference>
<dbReference type="Gene3D" id="1.10.455.10">
    <property type="entry name" value="Ribosomal protein S7 domain"/>
    <property type="match status" value="1"/>
</dbReference>
<dbReference type="HAMAP" id="MF_00480_B">
    <property type="entry name" value="Ribosomal_uS7_B"/>
    <property type="match status" value="1"/>
</dbReference>
<dbReference type="InterPro" id="IPR000235">
    <property type="entry name" value="Ribosomal_uS7"/>
</dbReference>
<dbReference type="InterPro" id="IPR005717">
    <property type="entry name" value="Ribosomal_uS7_bac/org-type"/>
</dbReference>
<dbReference type="InterPro" id="IPR020606">
    <property type="entry name" value="Ribosomal_uS7_CS"/>
</dbReference>
<dbReference type="InterPro" id="IPR023798">
    <property type="entry name" value="Ribosomal_uS7_dom"/>
</dbReference>
<dbReference type="InterPro" id="IPR036823">
    <property type="entry name" value="Ribosomal_uS7_dom_sf"/>
</dbReference>
<dbReference type="NCBIfam" id="TIGR01029">
    <property type="entry name" value="rpsG_bact"/>
    <property type="match status" value="1"/>
</dbReference>
<dbReference type="PANTHER" id="PTHR11205">
    <property type="entry name" value="RIBOSOMAL PROTEIN S7"/>
    <property type="match status" value="1"/>
</dbReference>
<dbReference type="Pfam" id="PF00177">
    <property type="entry name" value="Ribosomal_S7"/>
    <property type="match status" value="1"/>
</dbReference>
<dbReference type="PIRSF" id="PIRSF002122">
    <property type="entry name" value="RPS7p_RPS7a_RPS5e_RPS7o"/>
    <property type="match status" value="1"/>
</dbReference>
<dbReference type="SUPFAM" id="SSF47973">
    <property type="entry name" value="Ribosomal protein S7"/>
    <property type="match status" value="1"/>
</dbReference>
<dbReference type="PROSITE" id="PS00052">
    <property type="entry name" value="RIBOSOMAL_S7"/>
    <property type="match status" value="1"/>
</dbReference>
<name>RS7_ECO24</name>
<gene>
    <name evidence="1" type="primary">rpsG</name>
    <name type="ordered locus">EcE24377A_3810</name>
</gene>
<proteinExistence type="inferred from homology"/>
<organism>
    <name type="scientific">Escherichia coli O139:H28 (strain E24377A / ETEC)</name>
    <dbReference type="NCBI Taxonomy" id="331111"/>
    <lineage>
        <taxon>Bacteria</taxon>
        <taxon>Pseudomonadati</taxon>
        <taxon>Pseudomonadota</taxon>
        <taxon>Gammaproteobacteria</taxon>
        <taxon>Enterobacterales</taxon>
        <taxon>Enterobacteriaceae</taxon>
        <taxon>Escherichia</taxon>
    </lineage>
</organism>
<reference key="1">
    <citation type="journal article" date="2008" name="J. Bacteriol.">
        <title>The pangenome structure of Escherichia coli: comparative genomic analysis of E. coli commensal and pathogenic isolates.</title>
        <authorList>
            <person name="Rasko D.A."/>
            <person name="Rosovitz M.J."/>
            <person name="Myers G.S.A."/>
            <person name="Mongodin E.F."/>
            <person name="Fricke W.F."/>
            <person name="Gajer P."/>
            <person name="Crabtree J."/>
            <person name="Sebaihia M."/>
            <person name="Thomson N.R."/>
            <person name="Chaudhuri R."/>
            <person name="Henderson I.R."/>
            <person name="Sperandio V."/>
            <person name="Ravel J."/>
        </authorList>
    </citation>
    <scope>NUCLEOTIDE SEQUENCE [LARGE SCALE GENOMIC DNA]</scope>
    <source>
        <strain>E24377A / ETEC</strain>
    </source>
</reference>
<comment type="function">
    <text evidence="1">One of the primary rRNA binding proteins, it binds directly to 16S rRNA where it nucleates assembly of the head domain of the 30S subunit. Is located at the subunit interface close to the decoding center, probably blocks exit of the E-site tRNA.</text>
</comment>
<comment type="subunit">
    <text evidence="1">Part of the 30S ribosomal subunit. Contacts proteins S9 and S11.</text>
</comment>
<comment type="similarity">
    <text evidence="1">Belongs to the universal ribosomal protein uS7 family.</text>
</comment>
<protein>
    <recommendedName>
        <fullName evidence="1">Small ribosomal subunit protein uS7</fullName>
    </recommendedName>
    <alternativeName>
        <fullName evidence="2">30S ribosomal protein S7</fullName>
    </alternativeName>
</protein>
<keyword id="KW-1185">Reference proteome</keyword>
<keyword id="KW-0687">Ribonucleoprotein</keyword>
<keyword id="KW-0689">Ribosomal protein</keyword>
<keyword id="KW-0694">RNA-binding</keyword>
<keyword id="KW-0699">rRNA-binding</keyword>
<keyword id="KW-0820">tRNA-binding</keyword>
<sequence>MPRRRVIGQRKILPDPKFGSELLAKFVNILMVDGKKSTAESIVYSALETLAQRSGKSELEAFEVALENVRPTVEVKSRRVGGSTYQVPVEVRPVRRNALAMRWIVEAARKRGDKSMALRLANELSDAAENKGTAVKKREDVHRMAEANKAFAHYRW</sequence>